<sequence>MKQFRIHKDDKVMVIAGKDKGKIGKVLKILRNKDRILVEKVNVAKRHVRPNPYRQQPGGIIEKEMPLHVSNVMVVCDACAKPTKVGYRYTEDGKKVRFCKKCNEIID</sequence>
<reference key="1">
    <citation type="journal article" date="2009" name="Environ. Microbiol.">
        <title>Contribution of mobile genetic elements to Desulfovibrio vulgaris genome plasticity.</title>
        <authorList>
            <person name="Walker C.B."/>
            <person name="Stolyar S."/>
            <person name="Chivian D."/>
            <person name="Pinel N."/>
            <person name="Gabster J.A."/>
            <person name="Dehal P.S."/>
            <person name="He Z."/>
            <person name="Yang Z.K."/>
            <person name="Yen H.C."/>
            <person name="Zhou J."/>
            <person name="Wall J.D."/>
            <person name="Hazen T.C."/>
            <person name="Arkin A.P."/>
            <person name="Stahl D.A."/>
        </authorList>
    </citation>
    <scope>NUCLEOTIDE SEQUENCE [LARGE SCALE GENOMIC DNA]</scope>
    <source>
        <strain>DP4</strain>
    </source>
</reference>
<organism>
    <name type="scientific">Nitratidesulfovibrio vulgaris (strain DP4)</name>
    <name type="common">Desulfovibrio vulgaris</name>
    <dbReference type="NCBI Taxonomy" id="391774"/>
    <lineage>
        <taxon>Bacteria</taxon>
        <taxon>Pseudomonadati</taxon>
        <taxon>Thermodesulfobacteriota</taxon>
        <taxon>Desulfovibrionia</taxon>
        <taxon>Desulfovibrionales</taxon>
        <taxon>Desulfovibrionaceae</taxon>
        <taxon>Nitratidesulfovibrio</taxon>
    </lineage>
</organism>
<protein>
    <recommendedName>
        <fullName evidence="1">Large ribosomal subunit protein uL24</fullName>
    </recommendedName>
    <alternativeName>
        <fullName evidence="2">50S ribosomal protein L24</fullName>
    </alternativeName>
</protein>
<gene>
    <name evidence="1" type="primary">rplX</name>
    <name type="ordered locus">Dvul_1754</name>
</gene>
<keyword id="KW-0687">Ribonucleoprotein</keyword>
<keyword id="KW-0689">Ribosomal protein</keyword>
<keyword id="KW-0694">RNA-binding</keyword>
<keyword id="KW-0699">rRNA-binding</keyword>
<dbReference type="EMBL" id="CP000527">
    <property type="protein sequence ID" value="ABM28771.1"/>
    <property type="molecule type" value="Genomic_DNA"/>
</dbReference>
<dbReference type="RefSeq" id="WP_010938609.1">
    <property type="nucleotide sequence ID" value="NC_008751.1"/>
</dbReference>
<dbReference type="SMR" id="A1VEA5"/>
<dbReference type="KEGG" id="dvl:Dvul_1754"/>
<dbReference type="HOGENOM" id="CLU_093315_2_3_7"/>
<dbReference type="Proteomes" id="UP000009173">
    <property type="component" value="Chromosome"/>
</dbReference>
<dbReference type="GO" id="GO:1990904">
    <property type="term" value="C:ribonucleoprotein complex"/>
    <property type="evidence" value="ECO:0007669"/>
    <property type="project" value="UniProtKB-KW"/>
</dbReference>
<dbReference type="GO" id="GO:0005840">
    <property type="term" value="C:ribosome"/>
    <property type="evidence" value="ECO:0007669"/>
    <property type="project" value="UniProtKB-KW"/>
</dbReference>
<dbReference type="GO" id="GO:0019843">
    <property type="term" value="F:rRNA binding"/>
    <property type="evidence" value="ECO:0007669"/>
    <property type="project" value="UniProtKB-UniRule"/>
</dbReference>
<dbReference type="GO" id="GO:0003735">
    <property type="term" value="F:structural constituent of ribosome"/>
    <property type="evidence" value="ECO:0007669"/>
    <property type="project" value="InterPro"/>
</dbReference>
<dbReference type="GO" id="GO:0006412">
    <property type="term" value="P:translation"/>
    <property type="evidence" value="ECO:0007669"/>
    <property type="project" value="UniProtKB-UniRule"/>
</dbReference>
<dbReference type="CDD" id="cd06089">
    <property type="entry name" value="KOW_RPL26"/>
    <property type="match status" value="1"/>
</dbReference>
<dbReference type="FunFam" id="2.30.30.30:FF:000004">
    <property type="entry name" value="50S ribosomal protein L24"/>
    <property type="match status" value="1"/>
</dbReference>
<dbReference type="Gene3D" id="2.30.30.30">
    <property type="match status" value="1"/>
</dbReference>
<dbReference type="HAMAP" id="MF_01326_B">
    <property type="entry name" value="Ribosomal_uL24_B"/>
    <property type="match status" value="1"/>
</dbReference>
<dbReference type="InterPro" id="IPR005824">
    <property type="entry name" value="KOW"/>
</dbReference>
<dbReference type="InterPro" id="IPR014722">
    <property type="entry name" value="Rib_uL2_dom2"/>
</dbReference>
<dbReference type="InterPro" id="IPR003256">
    <property type="entry name" value="Ribosomal_uL24"/>
</dbReference>
<dbReference type="InterPro" id="IPR005825">
    <property type="entry name" value="Ribosomal_uL24_CS"/>
</dbReference>
<dbReference type="InterPro" id="IPR041988">
    <property type="entry name" value="Ribosomal_uL24_KOW"/>
</dbReference>
<dbReference type="InterPro" id="IPR008991">
    <property type="entry name" value="Translation_prot_SH3-like_sf"/>
</dbReference>
<dbReference type="NCBIfam" id="TIGR01079">
    <property type="entry name" value="rplX_bact"/>
    <property type="match status" value="1"/>
</dbReference>
<dbReference type="PANTHER" id="PTHR12903">
    <property type="entry name" value="MITOCHONDRIAL RIBOSOMAL PROTEIN L24"/>
    <property type="match status" value="1"/>
</dbReference>
<dbReference type="Pfam" id="PF00467">
    <property type="entry name" value="KOW"/>
    <property type="match status" value="1"/>
</dbReference>
<dbReference type="Pfam" id="PF17136">
    <property type="entry name" value="ribosomal_L24"/>
    <property type="match status" value="1"/>
</dbReference>
<dbReference type="SMART" id="SM00739">
    <property type="entry name" value="KOW"/>
    <property type="match status" value="1"/>
</dbReference>
<dbReference type="SUPFAM" id="SSF50104">
    <property type="entry name" value="Translation proteins SH3-like domain"/>
    <property type="match status" value="1"/>
</dbReference>
<dbReference type="PROSITE" id="PS01108">
    <property type="entry name" value="RIBOSOMAL_L24"/>
    <property type="match status" value="1"/>
</dbReference>
<feature type="chain" id="PRO_0000355678" description="Large ribosomal subunit protein uL24">
    <location>
        <begin position="1"/>
        <end position="107"/>
    </location>
</feature>
<comment type="function">
    <text evidence="1">One of two assembly initiator proteins, it binds directly to the 5'-end of the 23S rRNA, where it nucleates assembly of the 50S subunit.</text>
</comment>
<comment type="function">
    <text evidence="1">One of the proteins that surrounds the polypeptide exit tunnel on the outside of the subunit.</text>
</comment>
<comment type="subunit">
    <text evidence="1">Part of the 50S ribosomal subunit.</text>
</comment>
<comment type="similarity">
    <text evidence="1">Belongs to the universal ribosomal protein uL24 family.</text>
</comment>
<name>RL24_NITV4</name>
<evidence type="ECO:0000255" key="1">
    <source>
        <dbReference type="HAMAP-Rule" id="MF_01326"/>
    </source>
</evidence>
<evidence type="ECO:0000305" key="2"/>
<proteinExistence type="inferred from homology"/>
<accession>A1VEA5</accession>